<organism>
    <name type="scientific">Methanococcus maripaludis (strain C6 / ATCC BAA-1332)</name>
    <dbReference type="NCBI Taxonomy" id="444158"/>
    <lineage>
        <taxon>Archaea</taxon>
        <taxon>Methanobacteriati</taxon>
        <taxon>Methanobacteriota</taxon>
        <taxon>Methanomada group</taxon>
        <taxon>Methanococci</taxon>
        <taxon>Methanococcales</taxon>
        <taxon>Methanococcaceae</taxon>
        <taxon>Methanococcus</taxon>
    </lineage>
</organism>
<name>RL10_METM6</name>
<reference key="1">
    <citation type="submission" date="2007-10" db="EMBL/GenBank/DDBJ databases">
        <title>Complete sequence of Methanococcus maripaludis C6.</title>
        <authorList>
            <consortium name="US DOE Joint Genome Institute"/>
            <person name="Copeland A."/>
            <person name="Lucas S."/>
            <person name="Lapidus A."/>
            <person name="Barry K."/>
            <person name="Glavina del Rio T."/>
            <person name="Dalin E."/>
            <person name="Tice H."/>
            <person name="Pitluck S."/>
            <person name="Clum A."/>
            <person name="Schmutz J."/>
            <person name="Larimer F."/>
            <person name="Land M."/>
            <person name="Hauser L."/>
            <person name="Kyrpides N."/>
            <person name="Mikhailova N."/>
            <person name="Sieprawska-Lupa M."/>
            <person name="Whitman W.B."/>
            <person name="Richardson P."/>
        </authorList>
    </citation>
    <scope>NUCLEOTIDE SEQUENCE [LARGE SCALE GENOMIC DNA]</scope>
    <source>
        <strain>C6 / ATCC BAA-1332</strain>
    </source>
</reference>
<accession>A9A838</accession>
<sequence>MIDAKSEHKIAPWKIEEVNALKELLKSTSIIALIDMMEVPAVQLQEIRDKIRDQMTLKMSRNTLMKRAIEEVAEETGNPEFAKLADYLDKGAAIIATEMNPFKLFKTLDESKSPAPVKGGATAPCDIEVKAGSTGMPPGPFLSELKAVGIPAAIDKGKIGIKEDKVVIKEGEVVSQKLAVVLSALGIKPVTVGLNVLGVYEDGVIYTESELRIDEEEFIGKIQKAYTSAFNLSVNAVIPTSATVETIVQKAFNDAKAVSVESAFVTDKTADAILGKAYAQMIAVAGLASDDALDEELKEKISSGAAAPVEEAPVEEKKEEKKEEAAPAAGLGMLF</sequence>
<protein>
    <recommendedName>
        <fullName evidence="1">Large ribosomal subunit protein uL10</fullName>
    </recommendedName>
    <alternativeName>
        <fullName evidence="3">50S ribosomal protein L10</fullName>
    </alternativeName>
    <alternativeName>
        <fullName evidence="1">Acidic ribosomal protein P0 homolog</fullName>
    </alternativeName>
</protein>
<evidence type="ECO:0000255" key="1">
    <source>
        <dbReference type="HAMAP-Rule" id="MF_00280"/>
    </source>
</evidence>
<evidence type="ECO:0000256" key="2">
    <source>
        <dbReference type="SAM" id="MobiDB-lite"/>
    </source>
</evidence>
<evidence type="ECO:0000305" key="3"/>
<feature type="chain" id="PRO_1000114837" description="Large ribosomal subunit protein uL10">
    <location>
        <begin position="1"/>
        <end position="335"/>
    </location>
</feature>
<feature type="region of interest" description="Disordered" evidence="2">
    <location>
        <begin position="304"/>
        <end position="335"/>
    </location>
</feature>
<feature type="compositionally biased region" description="Basic and acidic residues" evidence="2">
    <location>
        <begin position="314"/>
        <end position="325"/>
    </location>
</feature>
<keyword id="KW-0687">Ribonucleoprotein</keyword>
<keyword id="KW-0689">Ribosomal protein</keyword>
<keyword id="KW-0694">RNA-binding</keyword>
<keyword id="KW-0699">rRNA-binding</keyword>
<proteinExistence type="inferred from homology"/>
<gene>
    <name evidence="1" type="primary">rpl10</name>
    <name evidence="1" type="synonym">rplP0</name>
    <name type="ordered locus">MmarC6_0694</name>
</gene>
<dbReference type="EMBL" id="CP000867">
    <property type="protein sequence ID" value="ABX01511.1"/>
    <property type="molecule type" value="Genomic_DNA"/>
</dbReference>
<dbReference type="SMR" id="A9A838"/>
<dbReference type="STRING" id="444158.MmarC6_0694"/>
<dbReference type="KEGG" id="mmx:MmarC6_0694"/>
<dbReference type="eggNOG" id="arCOG04288">
    <property type="taxonomic scope" value="Archaea"/>
</dbReference>
<dbReference type="HOGENOM" id="CLU_053173_0_0_2"/>
<dbReference type="OrthoDB" id="30930at2157"/>
<dbReference type="PhylomeDB" id="A9A838"/>
<dbReference type="GO" id="GO:0022625">
    <property type="term" value="C:cytosolic large ribosomal subunit"/>
    <property type="evidence" value="ECO:0007669"/>
    <property type="project" value="TreeGrafter"/>
</dbReference>
<dbReference type="GO" id="GO:0070180">
    <property type="term" value="F:large ribosomal subunit rRNA binding"/>
    <property type="evidence" value="ECO:0007669"/>
    <property type="project" value="UniProtKB-UniRule"/>
</dbReference>
<dbReference type="GO" id="GO:0003735">
    <property type="term" value="F:structural constituent of ribosome"/>
    <property type="evidence" value="ECO:0007669"/>
    <property type="project" value="TreeGrafter"/>
</dbReference>
<dbReference type="GO" id="GO:0002181">
    <property type="term" value="P:cytoplasmic translation"/>
    <property type="evidence" value="ECO:0007669"/>
    <property type="project" value="TreeGrafter"/>
</dbReference>
<dbReference type="GO" id="GO:0000027">
    <property type="term" value="P:ribosomal large subunit assembly"/>
    <property type="evidence" value="ECO:0007669"/>
    <property type="project" value="TreeGrafter"/>
</dbReference>
<dbReference type="CDD" id="cd05795">
    <property type="entry name" value="Ribosomal_P0_L10e"/>
    <property type="match status" value="1"/>
</dbReference>
<dbReference type="FunFam" id="3.90.105.20:FF:000001">
    <property type="entry name" value="60S acidic ribosomal protein P0"/>
    <property type="match status" value="1"/>
</dbReference>
<dbReference type="Gene3D" id="3.30.70.1730">
    <property type="match status" value="1"/>
</dbReference>
<dbReference type="Gene3D" id="3.90.105.20">
    <property type="match status" value="1"/>
</dbReference>
<dbReference type="Gene3D" id="6.10.140.760">
    <property type="match status" value="1"/>
</dbReference>
<dbReference type="HAMAP" id="MF_00280">
    <property type="entry name" value="Ribosomal_uL10_arch"/>
    <property type="match status" value="1"/>
</dbReference>
<dbReference type="InterPro" id="IPR050323">
    <property type="entry name" value="Ribosomal_protein_uL10"/>
</dbReference>
<dbReference type="InterPro" id="IPR001790">
    <property type="entry name" value="Ribosomal_uL10"/>
</dbReference>
<dbReference type="InterPro" id="IPR040637">
    <property type="entry name" value="Ribosomal_uL10-like_insert"/>
</dbReference>
<dbReference type="InterPro" id="IPR043164">
    <property type="entry name" value="Ribosomal_uL10-like_insert_sf"/>
</dbReference>
<dbReference type="InterPro" id="IPR043141">
    <property type="entry name" value="Ribosomal_uL10-like_sf"/>
</dbReference>
<dbReference type="InterPro" id="IPR022909">
    <property type="entry name" value="Ribosomal_uL10_arc"/>
</dbReference>
<dbReference type="NCBIfam" id="NF003096">
    <property type="entry name" value="PRK04019.1-2"/>
    <property type="match status" value="1"/>
</dbReference>
<dbReference type="NCBIfam" id="NF003098">
    <property type="entry name" value="PRK04019.1-5"/>
    <property type="match status" value="1"/>
</dbReference>
<dbReference type="PANTHER" id="PTHR45699">
    <property type="entry name" value="60S ACIDIC RIBOSOMAL PROTEIN P0"/>
    <property type="match status" value="1"/>
</dbReference>
<dbReference type="PANTHER" id="PTHR45699:SF3">
    <property type="entry name" value="LARGE RIBOSOMAL SUBUNIT PROTEIN UL10"/>
    <property type="match status" value="1"/>
</dbReference>
<dbReference type="Pfam" id="PF00466">
    <property type="entry name" value="Ribosomal_L10"/>
    <property type="match status" value="1"/>
</dbReference>
<dbReference type="Pfam" id="PF17777">
    <property type="entry name" value="RL10P_insert"/>
    <property type="match status" value="1"/>
</dbReference>
<dbReference type="SUPFAM" id="SSF160369">
    <property type="entry name" value="Ribosomal protein L10-like"/>
    <property type="match status" value="1"/>
</dbReference>
<comment type="function">
    <text evidence="1">Forms part of the ribosomal stalk, playing a central role in the interaction of the ribosome with GTP-bound translation factors.</text>
</comment>
<comment type="subunit">
    <text evidence="1">Part of the 50S ribosomal subunit. Forms part of the ribosomal stalk which helps the ribosome interact with GTP-bound translation factors. Forms a heptameric L10(L12)2(L12)2(L12)2 complex, where L10 forms an elongated spine to which the L12 dimers bind in a sequential fashion.</text>
</comment>
<comment type="similarity">
    <text evidence="1">Belongs to the universal ribosomal protein uL10 family.</text>
</comment>